<organism>
    <name type="scientific">Yersinia pestis</name>
    <dbReference type="NCBI Taxonomy" id="632"/>
    <lineage>
        <taxon>Bacteria</taxon>
        <taxon>Pseudomonadati</taxon>
        <taxon>Pseudomonadota</taxon>
        <taxon>Gammaproteobacteria</taxon>
        <taxon>Enterobacterales</taxon>
        <taxon>Yersiniaceae</taxon>
        <taxon>Yersinia</taxon>
    </lineage>
</organism>
<feature type="chain" id="PRO_0000268604" description="Putative multidrug resistance protein MdtD">
    <location>
        <begin position="1"/>
        <end position="465"/>
    </location>
</feature>
<feature type="transmembrane region" description="Helical" evidence="1">
    <location>
        <begin position="12"/>
        <end position="32"/>
    </location>
</feature>
<feature type="transmembrane region" description="Helical" evidence="1">
    <location>
        <begin position="49"/>
        <end position="69"/>
    </location>
</feature>
<feature type="transmembrane region" description="Helical" evidence="1">
    <location>
        <begin position="72"/>
        <end position="92"/>
    </location>
</feature>
<feature type="transmembrane region" description="Helical" evidence="1">
    <location>
        <begin position="102"/>
        <end position="124"/>
    </location>
</feature>
<feature type="transmembrane region" description="Helical" evidence="1">
    <location>
        <begin position="138"/>
        <end position="158"/>
    </location>
</feature>
<feature type="transmembrane region" description="Helical" evidence="1">
    <location>
        <begin position="165"/>
        <end position="185"/>
    </location>
</feature>
<feature type="transmembrane region" description="Helical" evidence="1">
    <location>
        <begin position="195"/>
        <end position="215"/>
    </location>
</feature>
<feature type="transmembrane region" description="Helical" evidence="1">
    <location>
        <begin position="219"/>
        <end position="239"/>
    </location>
</feature>
<feature type="transmembrane region" description="Helical" evidence="1">
    <location>
        <begin position="267"/>
        <end position="287"/>
    </location>
</feature>
<feature type="transmembrane region" description="Helical" evidence="1">
    <location>
        <begin position="290"/>
        <end position="310"/>
    </location>
</feature>
<feature type="transmembrane region" description="Helical" evidence="1">
    <location>
        <begin position="342"/>
        <end position="362"/>
    </location>
</feature>
<feature type="transmembrane region" description="Helical" evidence="1">
    <location>
        <begin position="393"/>
        <end position="413"/>
    </location>
</feature>
<feature type="transmembrane region" description="Helical" evidence="1">
    <location>
        <begin position="430"/>
        <end position="450"/>
    </location>
</feature>
<name>MDTD_YERPE</name>
<protein>
    <recommendedName>
        <fullName evidence="1">Putative multidrug resistance protein MdtD</fullName>
    </recommendedName>
</protein>
<reference key="1">
    <citation type="journal article" date="2001" name="Nature">
        <title>Genome sequence of Yersinia pestis, the causative agent of plague.</title>
        <authorList>
            <person name="Parkhill J."/>
            <person name="Wren B.W."/>
            <person name="Thomson N.R."/>
            <person name="Titball R.W."/>
            <person name="Holden M.T.G."/>
            <person name="Prentice M.B."/>
            <person name="Sebaihia M."/>
            <person name="James K.D."/>
            <person name="Churcher C.M."/>
            <person name="Mungall K.L."/>
            <person name="Baker S."/>
            <person name="Basham D."/>
            <person name="Bentley S.D."/>
            <person name="Brooks K."/>
            <person name="Cerdeno-Tarraga A.-M."/>
            <person name="Chillingworth T."/>
            <person name="Cronin A."/>
            <person name="Davies R.M."/>
            <person name="Davis P."/>
            <person name="Dougan G."/>
            <person name="Feltwell T."/>
            <person name="Hamlin N."/>
            <person name="Holroyd S."/>
            <person name="Jagels K."/>
            <person name="Karlyshev A.V."/>
            <person name="Leather S."/>
            <person name="Moule S."/>
            <person name="Oyston P.C.F."/>
            <person name="Quail M.A."/>
            <person name="Rutherford K.M."/>
            <person name="Simmonds M."/>
            <person name="Skelton J."/>
            <person name="Stevens K."/>
            <person name="Whitehead S."/>
            <person name="Barrell B.G."/>
        </authorList>
    </citation>
    <scope>NUCLEOTIDE SEQUENCE [LARGE SCALE GENOMIC DNA]</scope>
    <source>
        <strain>CO-92 / Biovar Orientalis</strain>
    </source>
</reference>
<reference key="2">
    <citation type="journal article" date="2002" name="J. Bacteriol.">
        <title>Genome sequence of Yersinia pestis KIM.</title>
        <authorList>
            <person name="Deng W."/>
            <person name="Burland V."/>
            <person name="Plunkett G. III"/>
            <person name="Boutin A."/>
            <person name="Mayhew G.F."/>
            <person name="Liss P."/>
            <person name="Perna N.T."/>
            <person name="Rose D.J."/>
            <person name="Mau B."/>
            <person name="Zhou S."/>
            <person name="Schwartz D.C."/>
            <person name="Fetherston J.D."/>
            <person name="Lindler L.E."/>
            <person name="Brubaker R.R."/>
            <person name="Plano G.V."/>
            <person name="Straley S.C."/>
            <person name="McDonough K.A."/>
            <person name="Nilles M.L."/>
            <person name="Matson J.S."/>
            <person name="Blattner F.R."/>
            <person name="Perry R.D."/>
        </authorList>
    </citation>
    <scope>NUCLEOTIDE SEQUENCE [LARGE SCALE GENOMIC DNA]</scope>
    <source>
        <strain>KIM10+ / Biovar Mediaevalis</strain>
    </source>
</reference>
<reference key="3">
    <citation type="journal article" date="2004" name="DNA Res.">
        <title>Complete genome sequence of Yersinia pestis strain 91001, an isolate avirulent to humans.</title>
        <authorList>
            <person name="Song Y."/>
            <person name="Tong Z."/>
            <person name="Wang J."/>
            <person name="Wang L."/>
            <person name="Guo Z."/>
            <person name="Han Y."/>
            <person name="Zhang J."/>
            <person name="Pei D."/>
            <person name="Zhou D."/>
            <person name="Qin H."/>
            <person name="Pang X."/>
            <person name="Han Y."/>
            <person name="Zhai J."/>
            <person name="Li M."/>
            <person name="Cui B."/>
            <person name="Qi Z."/>
            <person name="Jin L."/>
            <person name="Dai R."/>
            <person name="Chen F."/>
            <person name="Li S."/>
            <person name="Ye C."/>
            <person name="Du Z."/>
            <person name="Lin W."/>
            <person name="Wang J."/>
            <person name="Yu J."/>
            <person name="Yang H."/>
            <person name="Wang J."/>
            <person name="Huang P."/>
            <person name="Yang R."/>
        </authorList>
    </citation>
    <scope>NUCLEOTIDE SEQUENCE [LARGE SCALE GENOMIC DNA]</scope>
    <source>
        <strain>91001 / Biovar Mediaevalis</strain>
    </source>
</reference>
<gene>
    <name evidence="1" type="primary">mdtD</name>
    <name type="ordered locus">YPO2850</name>
    <name type="ordered locus">y1383</name>
    <name type="ordered locus">YP_2717</name>
</gene>
<dbReference type="EMBL" id="AL590842">
    <property type="protein sequence ID" value="CAL21462.1"/>
    <property type="molecule type" value="Genomic_DNA"/>
</dbReference>
<dbReference type="EMBL" id="AE009952">
    <property type="protein sequence ID" value="AAM84955.1"/>
    <property type="molecule type" value="Genomic_DNA"/>
</dbReference>
<dbReference type="EMBL" id="AE017042">
    <property type="protein sequence ID" value="AAS62906.1"/>
    <property type="molecule type" value="Genomic_DNA"/>
</dbReference>
<dbReference type="PIR" id="AC0347">
    <property type="entry name" value="AC0347"/>
</dbReference>
<dbReference type="RefSeq" id="WP_002209795.1">
    <property type="nucleotide sequence ID" value="NZ_WUCM01000037.1"/>
</dbReference>
<dbReference type="RefSeq" id="YP_002347788.1">
    <property type="nucleotide sequence ID" value="NC_003143.1"/>
</dbReference>
<dbReference type="SMR" id="Q7CJL1"/>
<dbReference type="STRING" id="214092.YPO2850"/>
<dbReference type="PaxDb" id="214092-YPO2850"/>
<dbReference type="DNASU" id="1146330"/>
<dbReference type="EnsemblBacteria" id="AAS62906">
    <property type="protein sequence ID" value="AAS62906"/>
    <property type="gene ID" value="YP_2717"/>
</dbReference>
<dbReference type="KEGG" id="ype:YPO2850"/>
<dbReference type="KEGG" id="ypk:y1383"/>
<dbReference type="KEGG" id="ypm:YP_2717"/>
<dbReference type="PATRIC" id="fig|1028802.3.peg.1948"/>
<dbReference type="eggNOG" id="COG0477">
    <property type="taxonomic scope" value="Bacteria"/>
</dbReference>
<dbReference type="HOGENOM" id="CLU_000960_28_0_6"/>
<dbReference type="OMA" id="GCTMMPL"/>
<dbReference type="OrthoDB" id="9812221at2"/>
<dbReference type="Proteomes" id="UP000000815">
    <property type="component" value="Chromosome"/>
</dbReference>
<dbReference type="Proteomes" id="UP000001019">
    <property type="component" value="Chromosome"/>
</dbReference>
<dbReference type="Proteomes" id="UP000002490">
    <property type="component" value="Chromosome"/>
</dbReference>
<dbReference type="GO" id="GO:0005886">
    <property type="term" value="C:plasma membrane"/>
    <property type="evidence" value="ECO:0000318"/>
    <property type="project" value="GO_Central"/>
</dbReference>
<dbReference type="GO" id="GO:0022857">
    <property type="term" value="F:transmembrane transporter activity"/>
    <property type="evidence" value="ECO:0000318"/>
    <property type="project" value="GO_Central"/>
</dbReference>
<dbReference type="GO" id="GO:0055085">
    <property type="term" value="P:transmembrane transport"/>
    <property type="evidence" value="ECO:0000318"/>
    <property type="project" value="GO_Central"/>
</dbReference>
<dbReference type="CDD" id="cd17503">
    <property type="entry name" value="MFS_LmrB_MDR_like"/>
    <property type="match status" value="1"/>
</dbReference>
<dbReference type="FunFam" id="1.20.1250.20:FF:000021">
    <property type="entry name" value="Putative multidrug resistance protein MdtD"/>
    <property type="match status" value="1"/>
</dbReference>
<dbReference type="FunFam" id="1.20.1720.10:FF:000001">
    <property type="entry name" value="Putative multidrug resistance protein MdtD"/>
    <property type="match status" value="1"/>
</dbReference>
<dbReference type="Gene3D" id="1.20.1250.20">
    <property type="entry name" value="MFS general substrate transporter like domains"/>
    <property type="match status" value="1"/>
</dbReference>
<dbReference type="Gene3D" id="1.20.1720.10">
    <property type="entry name" value="Multidrug resistance protein D"/>
    <property type="match status" value="1"/>
</dbReference>
<dbReference type="HAMAP" id="MF_01577">
    <property type="entry name" value="MFS_MdtD"/>
    <property type="match status" value="1"/>
</dbReference>
<dbReference type="InterPro" id="IPR004638">
    <property type="entry name" value="EmrB-like"/>
</dbReference>
<dbReference type="InterPro" id="IPR011701">
    <property type="entry name" value="MFS"/>
</dbReference>
<dbReference type="InterPro" id="IPR020846">
    <property type="entry name" value="MFS_dom"/>
</dbReference>
<dbReference type="InterPro" id="IPR036259">
    <property type="entry name" value="MFS_trans_sf"/>
</dbReference>
<dbReference type="InterPro" id="IPR023721">
    <property type="entry name" value="Multi-R_MdtD"/>
</dbReference>
<dbReference type="NCBIfam" id="TIGR00711">
    <property type="entry name" value="efflux_EmrB"/>
    <property type="match status" value="1"/>
</dbReference>
<dbReference type="NCBIfam" id="NF007799">
    <property type="entry name" value="PRK10504.1"/>
    <property type="match status" value="1"/>
</dbReference>
<dbReference type="PANTHER" id="PTHR42718:SF46">
    <property type="entry name" value="BLR6921 PROTEIN"/>
    <property type="match status" value="1"/>
</dbReference>
<dbReference type="PANTHER" id="PTHR42718">
    <property type="entry name" value="MAJOR FACILITATOR SUPERFAMILY MULTIDRUG TRANSPORTER MFSC"/>
    <property type="match status" value="1"/>
</dbReference>
<dbReference type="Pfam" id="PF07690">
    <property type="entry name" value="MFS_1"/>
    <property type="match status" value="1"/>
</dbReference>
<dbReference type="PRINTS" id="PR01036">
    <property type="entry name" value="TCRTETB"/>
</dbReference>
<dbReference type="SUPFAM" id="SSF103473">
    <property type="entry name" value="MFS general substrate transporter"/>
    <property type="match status" value="1"/>
</dbReference>
<dbReference type="PROSITE" id="PS50850">
    <property type="entry name" value="MFS"/>
    <property type="match status" value="1"/>
</dbReference>
<comment type="subcellular location">
    <subcellularLocation>
        <location evidence="1">Cell inner membrane</location>
        <topology evidence="1">Multi-pass membrane protein</topology>
    </subcellularLocation>
</comment>
<comment type="similarity">
    <text evidence="1">Belongs to the major facilitator superfamily. TCR/Tet family.</text>
</comment>
<keyword id="KW-0997">Cell inner membrane</keyword>
<keyword id="KW-1003">Cell membrane</keyword>
<keyword id="KW-0472">Membrane</keyword>
<keyword id="KW-1185">Reference proteome</keyword>
<keyword id="KW-0812">Transmembrane</keyword>
<keyword id="KW-1133">Transmembrane helix</keyword>
<keyword id="KW-0813">Transport</keyword>
<sequence>MVTQATSVRWQLWIVAFGFFMQTLDTTIVNTALPSIAASLGENPLRMQSVIVSYVLTVAVMLPASGWLADRIGVKWVFFSAIILFTFGSLMCAQSATLNELILSRVLQGVGGAMMVPVGRLTVMKIVPREQYMAAMAFVTLPGQIGPLVGPALGGFLVEFASWHWIFLINLPVGVIGALATLLLMPNHKMSTRRFDISGFIMLAIGMATLTLALDGHTGLGLSPLAIAGLILCGVIALGSYWWHALGNRFALFSLHLFKNKIYTLGLVGSMSARIGSGMLPFMTPIFLQIGLGFSPFHAGLMMIPMIIGSMGMKRIIVQVVNRFGYRRVLVNATLLLAVVSLSLPLVAIMGWTLLMPVVLFFQGMLNALRFSTMNTLTLKTLPDRLASSGNSLLSMAMQLSMSIGVSTAGILLGTFAHHQVATNTPATHSAFLYSYLCMAIIIALPALIFNRVPPDTGANRHLAR</sequence>
<accession>Q7CJL1</accession>
<accession>Q74SA5</accession>
<evidence type="ECO:0000255" key="1">
    <source>
        <dbReference type="HAMAP-Rule" id="MF_01577"/>
    </source>
</evidence>
<proteinExistence type="inferred from homology"/>